<organism>
    <name type="scientific">Candida albicans (strain SC5314 / ATCC MYA-2876)</name>
    <name type="common">Yeast</name>
    <dbReference type="NCBI Taxonomy" id="237561"/>
    <lineage>
        <taxon>Eukaryota</taxon>
        <taxon>Fungi</taxon>
        <taxon>Dikarya</taxon>
        <taxon>Ascomycota</taxon>
        <taxon>Saccharomycotina</taxon>
        <taxon>Pichiomycetes</taxon>
        <taxon>Debaryomycetaceae</taxon>
        <taxon>Candida/Lodderomyces clade</taxon>
        <taxon>Candida</taxon>
    </lineage>
</organism>
<feature type="chain" id="PRO_0000238534" description="mRNA 3'-end-processing protein YTH1">
    <location>
        <begin position="1"/>
        <end position="215"/>
    </location>
</feature>
<feature type="zinc finger region" description="C3H1-type 1" evidence="2">
    <location>
        <begin position="32"/>
        <end position="63"/>
    </location>
</feature>
<feature type="zinc finger region" description="C3H1-type 2" evidence="2">
    <location>
        <begin position="65"/>
        <end position="92"/>
    </location>
</feature>
<feature type="zinc finger region" description="C3H1-type 3" evidence="2">
    <location>
        <begin position="93"/>
        <end position="121"/>
    </location>
</feature>
<feature type="zinc finger region" description="C3H1-type 4" evidence="2">
    <location>
        <begin position="122"/>
        <end position="149"/>
    </location>
</feature>
<feature type="zinc finger region" description="C3H1-type 5" evidence="2">
    <location>
        <begin position="151"/>
        <end position="173"/>
    </location>
</feature>
<feature type="region of interest" description="Disordered" evidence="3">
    <location>
        <begin position="192"/>
        <end position="215"/>
    </location>
</feature>
<feature type="compositionally biased region" description="Basic and acidic residues" evidence="3">
    <location>
        <begin position="193"/>
        <end position="215"/>
    </location>
</feature>
<accession>Q59T36</accession>
<accession>A0A1D8PHH3</accession>
<protein>
    <recommendedName>
        <fullName>mRNA 3'-end-processing protein YTH1</fullName>
    </recommendedName>
</protein>
<comment type="function">
    <text evidence="1">Component of the cleavage factor I (CF I) involved in pre-mRNA 3'-end processing.</text>
</comment>
<comment type="subcellular location">
    <subcellularLocation>
        <location evidence="1">Nucleus</location>
    </subcellularLocation>
</comment>
<comment type="similarity">
    <text evidence="4">Belongs to the CPSF4/YTH1 family.</text>
</comment>
<evidence type="ECO:0000250" key="1"/>
<evidence type="ECO:0000255" key="2">
    <source>
        <dbReference type="PROSITE-ProRule" id="PRU00723"/>
    </source>
</evidence>
<evidence type="ECO:0000256" key="3">
    <source>
        <dbReference type="SAM" id="MobiDB-lite"/>
    </source>
</evidence>
<evidence type="ECO:0000305" key="4"/>
<proteinExistence type="inferred from homology"/>
<reference key="1">
    <citation type="journal article" date="2004" name="Proc. Natl. Acad. Sci. U.S.A.">
        <title>The diploid genome sequence of Candida albicans.</title>
        <authorList>
            <person name="Jones T."/>
            <person name="Federspiel N.A."/>
            <person name="Chibana H."/>
            <person name="Dungan J."/>
            <person name="Kalman S."/>
            <person name="Magee B.B."/>
            <person name="Newport G."/>
            <person name="Thorstenson Y.R."/>
            <person name="Agabian N."/>
            <person name="Magee P.T."/>
            <person name="Davis R.W."/>
            <person name="Scherer S."/>
        </authorList>
    </citation>
    <scope>NUCLEOTIDE SEQUENCE [LARGE SCALE GENOMIC DNA]</scope>
    <source>
        <strain>SC5314 / ATCC MYA-2876</strain>
    </source>
</reference>
<reference key="2">
    <citation type="journal article" date="2007" name="Genome Biol.">
        <title>Assembly of the Candida albicans genome into sixteen supercontigs aligned on the eight chromosomes.</title>
        <authorList>
            <person name="van het Hoog M."/>
            <person name="Rast T.J."/>
            <person name="Martchenko M."/>
            <person name="Grindle S."/>
            <person name="Dignard D."/>
            <person name="Hogues H."/>
            <person name="Cuomo C."/>
            <person name="Berriman M."/>
            <person name="Scherer S."/>
            <person name="Magee B.B."/>
            <person name="Whiteway M."/>
            <person name="Chibana H."/>
            <person name="Nantel A."/>
            <person name="Magee P.T."/>
        </authorList>
    </citation>
    <scope>GENOME REANNOTATION</scope>
    <source>
        <strain>SC5314 / ATCC MYA-2876</strain>
    </source>
</reference>
<reference key="3">
    <citation type="journal article" date="2013" name="Genome Biol.">
        <title>Assembly of a phased diploid Candida albicans genome facilitates allele-specific measurements and provides a simple model for repeat and indel structure.</title>
        <authorList>
            <person name="Muzzey D."/>
            <person name="Schwartz K."/>
            <person name="Weissman J.S."/>
            <person name="Sherlock G."/>
        </authorList>
    </citation>
    <scope>NUCLEOTIDE SEQUENCE [LARGE SCALE GENOMIC DNA]</scope>
    <scope>GENOME REANNOTATION</scope>
    <source>
        <strain>SC5314 / ATCC MYA-2876</strain>
    </source>
</reference>
<gene>
    <name type="primary">YTH1</name>
    <name type="ordered locus">CAALFM_C205690CA</name>
    <name type="ORF">CaO19.14170</name>
    <name type="ORF">CaO19.6881</name>
</gene>
<keyword id="KW-0479">Metal-binding</keyword>
<keyword id="KW-0507">mRNA processing</keyword>
<keyword id="KW-0539">Nucleus</keyword>
<keyword id="KW-1185">Reference proteome</keyword>
<keyword id="KW-0677">Repeat</keyword>
<keyword id="KW-0694">RNA-binding</keyword>
<keyword id="KW-0862">Zinc</keyword>
<keyword id="KW-0863">Zinc-finger</keyword>
<name>YTH1_CANAL</name>
<dbReference type="EMBL" id="CP017624">
    <property type="protein sequence ID" value="AOW27580.1"/>
    <property type="molecule type" value="Genomic_DNA"/>
</dbReference>
<dbReference type="RefSeq" id="XP_712810.1">
    <property type="nucleotide sequence ID" value="XM_707717.1"/>
</dbReference>
<dbReference type="SMR" id="Q59T36"/>
<dbReference type="FunCoup" id="Q59T36">
    <property type="interactions" value="94"/>
</dbReference>
<dbReference type="STRING" id="237561.Q59T36"/>
<dbReference type="EnsemblFungi" id="C2_05690C_A-T">
    <property type="protein sequence ID" value="C2_05690C_A-T-p1"/>
    <property type="gene ID" value="C2_05690C_A"/>
</dbReference>
<dbReference type="GeneID" id="3645572"/>
<dbReference type="KEGG" id="cal:CAALFM_C205690CA"/>
<dbReference type="CGD" id="CAL0000192895">
    <property type="gene designation" value="YTH1"/>
</dbReference>
<dbReference type="VEuPathDB" id="FungiDB:C2_05690C_A"/>
<dbReference type="eggNOG" id="KOG1040">
    <property type="taxonomic scope" value="Eukaryota"/>
</dbReference>
<dbReference type="HOGENOM" id="CLU_024513_1_2_1"/>
<dbReference type="InParanoid" id="Q59T36"/>
<dbReference type="OMA" id="SLVCKHY"/>
<dbReference type="OrthoDB" id="1914176at2759"/>
<dbReference type="PRO" id="PR:Q59T36"/>
<dbReference type="Proteomes" id="UP000000559">
    <property type="component" value="Chromosome 2"/>
</dbReference>
<dbReference type="GO" id="GO:0005829">
    <property type="term" value="C:cytosol"/>
    <property type="evidence" value="ECO:0007669"/>
    <property type="project" value="EnsemblFungi"/>
</dbReference>
<dbReference type="GO" id="GO:0005847">
    <property type="term" value="C:mRNA cleavage and polyadenylation specificity factor complex"/>
    <property type="evidence" value="ECO:0007669"/>
    <property type="project" value="EnsemblFungi"/>
</dbReference>
<dbReference type="GO" id="GO:0003723">
    <property type="term" value="F:RNA binding"/>
    <property type="evidence" value="ECO:0007669"/>
    <property type="project" value="UniProtKB-KW"/>
</dbReference>
<dbReference type="GO" id="GO:0008270">
    <property type="term" value="F:zinc ion binding"/>
    <property type="evidence" value="ECO:0007669"/>
    <property type="project" value="UniProtKB-KW"/>
</dbReference>
<dbReference type="GO" id="GO:0006397">
    <property type="term" value="P:mRNA processing"/>
    <property type="evidence" value="ECO:0007669"/>
    <property type="project" value="UniProtKB-KW"/>
</dbReference>
<dbReference type="GO" id="GO:0009410">
    <property type="term" value="P:response to xenobiotic stimulus"/>
    <property type="evidence" value="ECO:0000315"/>
    <property type="project" value="CGD"/>
</dbReference>
<dbReference type="FunFam" id="4.10.1000.10:FF:000012">
    <property type="entry name" value="cleavage and polyadenylation specificity factor subunit 4"/>
    <property type="match status" value="1"/>
</dbReference>
<dbReference type="Gene3D" id="4.10.1000.10">
    <property type="entry name" value="Zinc finger, CCCH-type"/>
    <property type="match status" value="2"/>
</dbReference>
<dbReference type="InterPro" id="IPR045348">
    <property type="entry name" value="CPSF4/Yth1"/>
</dbReference>
<dbReference type="InterPro" id="IPR000571">
    <property type="entry name" value="Znf_CCCH"/>
</dbReference>
<dbReference type="InterPro" id="IPR036855">
    <property type="entry name" value="Znf_CCCH_sf"/>
</dbReference>
<dbReference type="PANTHER" id="PTHR23102:SF24">
    <property type="entry name" value="CLEAVAGE AND POLYADENYLATION SPECIFICITY FACTOR SUBUNIT 4"/>
    <property type="match status" value="1"/>
</dbReference>
<dbReference type="PANTHER" id="PTHR23102">
    <property type="entry name" value="CLEAVAGE AND POLYADENYLATION SPECIFICITY FACTOR SUBUNIT 4-RELATED"/>
    <property type="match status" value="1"/>
</dbReference>
<dbReference type="Pfam" id="PF00642">
    <property type="entry name" value="zf-CCCH"/>
    <property type="match status" value="1"/>
</dbReference>
<dbReference type="Pfam" id="PF14608">
    <property type="entry name" value="zf-CCCH_2"/>
    <property type="match status" value="4"/>
</dbReference>
<dbReference type="SMART" id="SM00356">
    <property type="entry name" value="ZnF_C3H1"/>
    <property type="match status" value="5"/>
</dbReference>
<dbReference type="SUPFAM" id="SSF90229">
    <property type="entry name" value="CCCH zinc finger"/>
    <property type="match status" value="2"/>
</dbReference>
<dbReference type="PROSITE" id="PS50103">
    <property type="entry name" value="ZF_C3H1"/>
    <property type="match status" value="5"/>
</dbReference>
<sequence>MLQSNPVIHPNTSNRHFKFEPFLRQEYNFGLDPDRPVCQFYNPLNPDNSCPQGNNCPNKHVSAMYSNKIVCKHWLRGLCKKGDHCEFLHEYNLRKMPECLFYSKNGYCTQTSECLYLHVDPQSKIPECLNYNQGFCSEGPNCKNRHVRRVLCPLYLYGFCPKGPECEFTHPKFDFHNLNLRIRPDNLIQMTSKHVDNSKEESDKKEDSEPKEESI</sequence>